<reference key="1">
    <citation type="journal article" date="2007" name="Proc. Natl. Acad. Sci. U.S.A.">
        <title>Genome sequencing reveals complex secondary metabolome in the marine actinomycete Salinispora tropica.</title>
        <authorList>
            <person name="Udwary D.W."/>
            <person name="Zeigler L."/>
            <person name="Asolkar R.N."/>
            <person name="Singan V."/>
            <person name="Lapidus A."/>
            <person name="Fenical W."/>
            <person name="Jensen P.R."/>
            <person name="Moore B.S."/>
        </authorList>
    </citation>
    <scope>NUCLEOTIDE SEQUENCE [LARGE SCALE GENOMIC DNA]</scope>
    <source>
        <strain>ATCC BAA-916 / DSM 44818 / JCM 13857 / NBRC 105044 / CNB-440</strain>
    </source>
</reference>
<gene>
    <name evidence="1" type="primary">dcd</name>
    <name type="ordered locus">Strop_0056</name>
</gene>
<protein>
    <recommendedName>
        <fullName evidence="1">dCTP deaminase, dUMP-forming</fullName>
        <ecNumber evidence="1">3.5.4.30</ecNumber>
    </recommendedName>
    <alternativeName>
        <fullName evidence="1">Bifunctional dCTP deaminase:dUTPase</fullName>
    </alternativeName>
    <alternativeName>
        <fullName evidence="1">DCD-DUT</fullName>
    </alternativeName>
</protein>
<organism>
    <name type="scientific">Salinispora tropica (strain ATCC BAA-916 / DSM 44818 / JCM 13857 / NBRC 105044 / CNB-440)</name>
    <dbReference type="NCBI Taxonomy" id="369723"/>
    <lineage>
        <taxon>Bacteria</taxon>
        <taxon>Bacillati</taxon>
        <taxon>Actinomycetota</taxon>
        <taxon>Actinomycetes</taxon>
        <taxon>Micromonosporales</taxon>
        <taxon>Micromonosporaceae</taxon>
        <taxon>Salinispora</taxon>
    </lineage>
</organism>
<comment type="function">
    <text evidence="1">Bifunctional enzyme that catalyzes both the deamination of dCTP to dUTP and the hydrolysis of dUTP to dUMP without releasing the toxic dUTP intermediate.</text>
</comment>
<comment type="catalytic activity">
    <reaction evidence="1">
        <text>dCTP + 2 H2O = dUMP + NH4(+) + diphosphate</text>
        <dbReference type="Rhea" id="RHEA:19205"/>
        <dbReference type="ChEBI" id="CHEBI:15377"/>
        <dbReference type="ChEBI" id="CHEBI:28938"/>
        <dbReference type="ChEBI" id="CHEBI:33019"/>
        <dbReference type="ChEBI" id="CHEBI:61481"/>
        <dbReference type="ChEBI" id="CHEBI:246422"/>
        <dbReference type="EC" id="3.5.4.30"/>
    </reaction>
</comment>
<comment type="pathway">
    <text evidence="1">Pyrimidine metabolism; dUMP biosynthesis; dUMP from dCTP: step 1/1.</text>
</comment>
<comment type="subunit">
    <text evidence="1">Homotrimer.</text>
</comment>
<comment type="similarity">
    <text evidence="1">Belongs to the dCTP deaminase family.</text>
</comment>
<name>DCDB_SALTO</name>
<keyword id="KW-0378">Hydrolase</keyword>
<keyword id="KW-0546">Nucleotide metabolism</keyword>
<keyword id="KW-0547">Nucleotide-binding</keyword>
<keyword id="KW-1185">Reference proteome</keyword>
<evidence type="ECO:0000255" key="1">
    <source>
        <dbReference type="HAMAP-Rule" id="MF_00146"/>
    </source>
</evidence>
<evidence type="ECO:0000256" key="2">
    <source>
        <dbReference type="SAM" id="MobiDB-lite"/>
    </source>
</evidence>
<accession>A4X0Z1</accession>
<proteinExistence type="inferred from homology"/>
<dbReference type="EC" id="3.5.4.30" evidence="1"/>
<dbReference type="EMBL" id="CP000667">
    <property type="protein sequence ID" value="ABP52541.1"/>
    <property type="molecule type" value="Genomic_DNA"/>
</dbReference>
<dbReference type="RefSeq" id="WP_011903978.1">
    <property type="nucleotide sequence ID" value="NC_009380.1"/>
</dbReference>
<dbReference type="SMR" id="A4X0Z1"/>
<dbReference type="STRING" id="369723.Strop_0056"/>
<dbReference type="KEGG" id="stp:Strop_0056"/>
<dbReference type="PATRIC" id="fig|369723.5.peg.57"/>
<dbReference type="eggNOG" id="COG0717">
    <property type="taxonomic scope" value="Bacteria"/>
</dbReference>
<dbReference type="HOGENOM" id="CLU_087476_2_1_11"/>
<dbReference type="UniPathway" id="UPA00610">
    <property type="reaction ID" value="UER00667"/>
</dbReference>
<dbReference type="Proteomes" id="UP000000235">
    <property type="component" value="Chromosome"/>
</dbReference>
<dbReference type="GO" id="GO:0033973">
    <property type="term" value="F:dCTP deaminase (dUMP-forming) activity"/>
    <property type="evidence" value="ECO:0007669"/>
    <property type="project" value="UniProtKB-UniRule"/>
</dbReference>
<dbReference type="GO" id="GO:0008829">
    <property type="term" value="F:dCTP deaminase activity"/>
    <property type="evidence" value="ECO:0007669"/>
    <property type="project" value="InterPro"/>
</dbReference>
<dbReference type="GO" id="GO:0000166">
    <property type="term" value="F:nucleotide binding"/>
    <property type="evidence" value="ECO:0007669"/>
    <property type="project" value="UniProtKB-KW"/>
</dbReference>
<dbReference type="GO" id="GO:0006226">
    <property type="term" value="P:dUMP biosynthetic process"/>
    <property type="evidence" value="ECO:0007669"/>
    <property type="project" value="UniProtKB-UniRule"/>
</dbReference>
<dbReference type="GO" id="GO:0006229">
    <property type="term" value="P:dUTP biosynthetic process"/>
    <property type="evidence" value="ECO:0007669"/>
    <property type="project" value="InterPro"/>
</dbReference>
<dbReference type="GO" id="GO:0015949">
    <property type="term" value="P:nucleobase-containing small molecule interconversion"/>
    <property type="evidence" value="ECO:0007669"/>
    <property type="project" value="TreeGrafter"/>
</dbReference>
<dbReference type="CDD" id="cd07557">
    <property type="entry name" value="trimeric_dUTPase"/>
    <property type="match status" value="1"/>
</dbReference>
<dbReference type="FunFam" id="2.70.40.10:FF:000005">
    <property type="entry name" value="dCTP deaminase, dUMP-forming"/>
    <property type="match status" value="1"/>
</dbReference>
<dbReference type="Gene3D" id="2.70.40.10">
    <property type="match status" value="1"/>
</dbReference>
<dbReference type="HAMAP" id="MF_00146">
    <property type="entry name" value="dCTP_deaminase"/>
    <property type="match status" value="1"/>
</dbReference>
<dbReference type="InterPro" id="IPR011962">
    <property type="entry name" value="dCTP_deaminase"/>
</dbReference>
<dbReference type="InterPro" id="IPR036157">
    <property type="entry name" value="dUTPase-like_sf"/>
</dbReference>
<dbReference type="InterPro" id="IPR033704">
    <property type="entry name" value="dUTPase_trimeric"/>
</dbReference>
<dbReference type="NCBIfam" id="TIGR02274">
    <property type="entry name" value="dCTP_deam"/>
    <property type="match status" value="1"/>
</dbReference>
<dbReference type="PANTHER" id="PTHR42680">
    <property type="entry name" value="DCTP DEAMINASE"/>
    <property type="match status" value="1"/>
</dbReference>
<dbReference type="PANTHER" id="PTHR42680:SF3">
    <property type="entry name" value="DCTP DEAMINASE"/>
    <property type="match status" value="1"/>
</dbReference>
<dbReference type="Pfam" id="PF22769">
    <property type="entry name" value="DCD"/>
    <property type="match status" value="1"/>
</dbReference>
<dbReference type="SUPFAM" id="SSF51283">
    <property type="entry name" value="dUTPase-like"/>
    <property type="match status" value="1"/>
</dbReference>
<sequence>MLLSDRDLAAEIKAGTLALEPFDPALVQPSSIDVRLDKLFRVFNNHLYTHIDPSRQQDDLTSAVEVPDGEPFVLHPGEFVLASTLEVISLGDQLAGRLEGKSSLGRLGLLTHSTAGFIDPGFSGHVTLELSNVANLPIMLWPGMKIGQLCIFRLCSPAEHPYGSAVYGSRYQGQRGPTPSRSWQSWRTWPTR</sequence>
<feature type="chain" id="PRO_1000076630" description="dCTP deaminase, dUMP-forming">
    <location>
        <begin position="1"/>
        <end position="192"/>
    </location>
</feature>
<feature type="region of interest" description="Disordered" evidence="2">
    <location>
        <begin position="169"/>
        <end position="192"/>
    </location>
</feature>
<feature type="compositionally biased region" description="Polar residues" evidence="2">
    <location>
        <begin position="171"/>
        <end position="192"/>
    </location>
</feature>
<feature type="active site" description="Proton donor/acceptor" evidence="1">
    <location>
        <position position="129"/>
    </location>
</feature>
<feature type="binding site" evidence="1">
    <location>
        <begin position="101"/>
        <end position="106"/>
    </location>
    <ligand>
        <name>dCTP</name>
        <dbReference type="ChEBI" id="CHEBI:61481"/>
    </ligand>
</feature>
<feature type="binding site" evidence="1">
    <location>
        <position position="119"/>
    </location>
    <ligand>
        <name>dCTP</name>
        <dbReference type="ChEBI" id="CHEBI:61481"/>
    </ligand>
</feature>
<feature type="binding site" evidence="1">
    <location>
        <begin position="127"/>
        <end position="129"/>
    </location>
    <ligand>
        <name>dCTP</name>
        <dbReference type="ChEBI" id="CHEBI:61481"/>
    </ligand>
</feature>
<feature type="binding site" evidence="1">
    <location>
        <position position="148"/>
    </location>
    <ligand>
        <name>dCTP</name>
        <dbReference type="ChEBI" id="CHEBI:61481"/>
    </ligand>
</feature>
<feature type="binding site" evidence="1">
    <location>
        <position position="162"/>
    </location>
    <ligand>
        <name>dCTP</name>
        <dbReference type="ChEBI" id="CHEBI:61481"/>
    </ligand>
</feature>
<feature type="binding site" evidence="1">
    <location>
        <position position="174"/>
    </location>
    <ligand>
        <name>dCTP</name>
        <dbReference type="ChEBI" id="CHEBI:61481"/>
    </ligand>
</feature>
<feature type="site" description="Important for bifunctional activity" evidence="1">
    <location>
        <begin position="116"/>
        <end position="117"/>
    </location>
</feature>